<proteinExistence type="evidence at protein level"/>
<accession>Q9HH78</accession>
<accession>Q7LWX8</accession>
<name>RL30_PYRFU</name>
<evidence type="ECO:0000255" key="1">
    <source>
        <dbReference type="HAMAP-Rule" id="MF_01371"/>
    </source>
</evidence>
<evidence type="ECO:0000269" key="2">
    <source>
    </source>
</evidence>
<evidence type="ECO:0007744" key="3">
    <source>
        <dbReference type="PDB" id="4V6U"/>
    </source>
</evidence>
<protein>
    <recommendedName>
        <fullName evidence="1">Large ribosomal subunit protein uL30</fullName>
    </recommendedName>
    <alternativeName>
        <fullName>50S ribosomal protein L30</fullName>
    </alternativeName>
    <alternativeName>
        <fullName>PfL30</fullName>
    </alternativeName>
</protein>
<organism>
    <name type="scientific">Pyrococcus furiosus (strain ATCC 43587 / DSM 3638 / JCM 8422 / Vc1)</name>
    <dbReference type="NCBI Taxonomy" id="186497"/>
    <lineage>
        <taxon>Archaea</taxon>
        <taxon>Methanobacteriati</taxon>
        <taxon>Methanobacteriota</taxon>
        <taxon>Thermococci</taxon>
        <taxon>Thermococcales</taxon>
        <taxon>Thermococcaceae</taxon>
        <taxon>Pyrococcus</taxon>
    </lineage>
</organism>
<dbReference type="EMBL" id="AB040118">
    <property type="protein sequence ID" value="BAB13705.1"/>
    <property type="molecule type" value="Genomic_DNA"/>
</dbReference>
<dbReference type="EMBL" id="AE009950">
    <property type="protein sequence ID" value="AAL81927.1"/>
    <property type="molecule type" value="Genomic_DNA"/>
</dbReference>
<dbReference type="RefSeq" id="WP_011012944.1">
    <property type="nucleotide sequence ID" value="NZ_CP023154.1"/>
</dbReference>
<dbReference type="PDB" id="4V4N">
    <property type="method" value="EM"/>
    <property type="resolution" value="9.00 A"/>
    <property type="chains" value="Y=1-155"/>
</dbReference>
<dbReference type="PDB" id="4V6U">
    <property type="method" value="EM"/>
    <property type="resolution" value="6.60 A"/>
    <property type="chains" value="BY=1-155"/>
</dbReference>
<dbReference type="PDBsum" id="4V4N"/>
<dbReference type="PDBsum" id="4V6U"/>
<dbReference type="SMR" id="Q9HH78"/>
<dbReference type="STRING" id="186497.PF1803"/>
<dbReference type="PaxDb" id="186497-PF1803"/>
<dbReference type="KEGG" id="pfu:PF1803"/>
<dbReference type="PATRIC" id="fig|186497.12.peg.1874"/>
<dbReference type="eggNOG" id="arCOG04086">
    <property type="taxonomic scope" value="Archaea"/>
</dbReference>
<dbReference type="HOGENOM" id="CLU_055156_6_0_2"/>
<dbReference type="OrthoDB" id="6379at2157"/>
<dbReference type="PhylomeDB" id="Q9HH78"/>
<dbReference type="Proteomes" id="UP000001013">
    <property type="component" value="Chromosome"/>
</dbReference>
<dbReference type="GO" id="GO:0022625">
    <property type="term" value="C:cytosolic large ribosomal subunit"/>
    <property type="evidence" value="ECO:0007669"/>
    <property type="project" value="TreeGrafter"/>
</dbReference>
<dbReference type="GO" id="GO:0003723">
    <property type="term" value="F:RNA binding"/>
    <property type="evidence" value="ECO:0007669"/>
    <property type="project" value="TreeGrafter"/>
</dbReference>
<dbReference type="GO" id="GO:0003735">
    <property type="term" value="F:structural constituent of ribosome"/>
    <property type="evidence" value="ECO:0007669"/>
    <property type="project" value="InterPro"/>
</dbReference>
<dbReference type="GO" id="GO:0000463">
    <property type="term" value="P:maturation of LSU-rRNA from tricistronic rRNA transcript (SSU-rRNA, 5.8S rRNA, LSU-rRNA)"/>
    <property type="evidence" value="ECO:0007669"/>
    <property type="project" value="TreeGrafter"/>
</dbReference>
<dbReference type="GO" id="GO:0006412">
    <property type="term" value="P:translation"/>
    <property type="evidence" value="ECO:0007669"/>
    <property type="project" value="UniProtKB-UniRule"/>
</dbReference>
<dbReference type="CDD" id="cd01657">
    <property type="entry name" value="Ribosomal_L7_archeal_euk"/>
    <property type="match status" value="1"/>
</dbReference>
<dbReference type="FunFam" id="1.10.15.30:FF:000002">
    <property type="entry name" value="50S ribosomal protein L30"/>
    <property type="match status" value="1"/>
</dbReference>
<dbReference type="Gene3D" id="1.10.15.30">
    <property type="match status" value="1"/>
</dbReference>
<dbReference type="Gene3D" id="3.30.1390.20">
    <property type="entry name" value="Ribosomal protein L30, ferredoxin-like fold domain"/>
    <property type="match status" value="1"/>
</dbReference>
<dbReference type="HAMAP" id="MF_01371_A">
    <property type="entry name" value="Ribosomal_uL30_A"/>
    <property type="match status" value="1"/>
</dbReference>
<dbReference type="InterPro" id="IPR036919">
    <property type="entry name" value="Ribo_uL30_ferredoxin-like_sf"/>
</dbReference>
<dbReference type="InterPro" id="IPR039699">
    <property type="entry name" value="Ribosomal_uL30"/>
</dbReference>
<dbReference type="InterPro" id="IPR005997">
    <property type="entry name" value="Ribosomal_uL30_arc"/>
</dbReference>
<dbReference type="InterPro" id="IPR018038">
    <property type="entry name" value="Ribosomal_uL30_CS"/>
</dbReference>
<dbReference type="InterPro" id="IPR035808">
    <property type="entry name" value="Ribosomal_uL30_euk_arc"/>
</dbReference>
<dbReference type="InterPro" id="IPR016082">
    <property type="entry name" value="Ribosomal_uL30_ferredoxin-like"/>
</dbReference>
<dbReference type="NCBIfam" id="NF004711">
    <property type="entry name" value="PRK06049.1"/>
    <property type="match status" value="1"/>
</dbReference>
<dbReference type="NCBIfam" id="TIGR01309">
    <property type="entry name" value="uL30_arch"/>
    <property type="match status" value="1"/>
</dbReference>
<dbReference type="PANTHER" id="PTHR11524">
    <property type="entry name" value="60S RIBOSOMAL PROTEIN L7"/>
    <property type="match status" value="1"/>
</dbReference>
<dbReference type="PANTHER" id="PTHR11524:SF16">
    <property type="entry name" value="LARGE RIBOSOMAL SUBUNIT PROTEIN UL30"/>
    <property type="match status" value="1"/>
</dbReference>
<dbReference type="Pfam" id="PF00327">
    <property type="entry name" value="Ribosomal_L30"/>
    <property type="match status" value="1"/>
</dbReference>
<dbReference type="SUPFAM" id="SSF55129">
    <property type="entry name" value="Ribosomal protein L30p/L7e"/>
    <property type="match status" value="1"/>
</dbReference>
<dbReference type="PROSITE" id="PS00634">
    <property type="entry name" value="RIBOSOMAL_L30"/>
    <property type="match status" value="1"/>
</dbReference>
<reference key="1">
    <citation type="journal article" date="2000" name="FEBS Lett.">
        <title>5S rRNA binding proteins from the hyperthermophilic archaeon, Pyrococcus furiosus.</title>
        <authorList>
            <person name="Furumoto H."/>
            <person name="Taguchi A."/>
            <person name="Itoh T."/>
            <person name="Morinaga T."/>
            <person name="Itoh T."/>
        </authorList>
    </citation>
    <scope>NUCLEOTIDE SEQUENCE [GENOMIC DNA]</scope>
    <source>
        <strain>ATCC 43587 / DSM 3638 / JCM 8422 / Vc1</strain>
    </source>
</reference>
<reference key="2">
    <citation type="journal article" date="1999" name="Genetics">
        <title>Divergence of the hyperthermophilic archaea Pyrococcus furiosus and P. horikoshii inferred from complete genomic sequences.</title>
        <authorList>
            <person name="Maeder D.L."/>
            <person name="Weiss R.B."/>
            <person name="Dunn D.M."/>
            <person name="Cherry J.L."/>
            <person name="Gonzalez J.M."/>
            <person name="DiRuggiero J."/>
            <person name="Robb F.T."/>
        </authorList>
    </citation>
    <scope>NUCLEOTIDE SEQUENCE [LARGE SCALE GENOMIC DNA]</scope>
    <source>
        <strain>ATCC 43587 / DSM 3638 / JCM 8422 / Vc1</strain>
    </source>
</reference>
<reference evidence="3" key="3">
    <citation type="journal article" date="2013" name="Nucleic Acids Res.">
        <title>Promiscuous behaviour of archaeal ribosomal proteins: implications for eukaryotic ribosome evolution.</title>
        <authorList>
            <person name="Armache J.P."/>
            <person name="Anger A.M."/>
            <person name="Marquez V."/>
            <person name="Franckenberg S."/>
            <person name="Frohlich T."/>
            <person name="Villa E."/>
            <person name="Berninghausen O."/>
            <person name="Thomm M."/>
            <person name="Arnold G.J."/>
            <person name="Beckmann R."/>
            <person name="Wilson D.N."/>
        </authorList>
    </citation>
    <scope>STRUCTURE BY ELECTRON MICROSCOPY (6.60 ANGSTROMS) IN THE 70S RIBOSOME</scope>
    <scope>SUBUNIT</scope>
</reference>
<keyword id="KW-0002">3D-structure</keyword>
<keyword id="KW-1185">Reference proteome</keyword>
<keyword id="KW-0687">Ribonucleoprotein</keyword>
<keyword id="KW-0689">Ribosomal protein</keyword>
<comment type="subunit">
    <text evidence="2">Part of the 50S ribosomal subunit.</text>
</comment>
<comment type="similarity">
    <text evidence="1">Belongs to the universal ribosomal protein uL30 family.</text>
</comment>
<sequence length="155" mass="17710">MAKLAVIRIRGRVNVKRPVRDTLAMLRLHRVNHCVIVDDTPSYLGMLQKAKDYITWGEINAETLAKLIRKRGRLIGNKPVTDEYVKEKLGMTIEEFAQKVVNGEMSLKDLPNLKPVFRLHPPRGGFRGSKKRSFKEGGALGYRGEKINELIERML</sequence>
<gene>
    <name evidence="1" type="primary">rpl30</name>
    <name type="ordered locus">PF1803</name>
</gene>
<feature type="chain" id="PRO_0000104628" description="Large ribosomal subunit protein uL30">
    <location>
        <begin position="1"/>
        <end position="155"/>
    </location>
</feature>